<comment type="function">
    <text evidence="1">Probable transcription factor.</text>
</comment>
<comment type="subcellular location">
    <subcellularLocation>
        <location evidence="7">Nucleus</location>
    </subcellularLocation>
</comment>
<comment type="tissue specificity">
    <text evidence="6">Expressed in seedlings, roots, stems, leaf sheaths and blades and panicles.</text>
</comment>
<comment type="similarity">
    <text evidence="7">Belongs to the HD-ZIP homeobox family. Class III subfamily.</text>
</comment>
<sequence>MAAAMVAAVHGVGRQDRSSPGGGGAPQVDTGKYVRYTPEQVEALERVYGECPKPSSLRRQQLIRECPILSNIEPKQIKVWFQNRRCREKQRKEASRLQTVNRKLTAMNKLLMEENDRLQKQVSRLVYENGYMRQQLHNPSVATTDTSCESVVTSGQHHQQQNPAATRPQRDANNPAGLLAIAEETLAEFLSKATGTAVDWVQMVGMKPGPDSIGIIAVSHNCSGVAARACGLVSLEPTKVAEILKDRPSWYRDCRCVDVLHVIPTGNGGTIELIYMQTYAPTTLAAPRDFWILRYTSGLEDGSLVICERSLTQSTGGPSGPNTPNFVRAEVLPSGYLIRPCEGGGSMIHIVDHVDLDAWSVPEVLRPLYESPKILAQKMTIAALRHIRQIAHESSGEMPYGGGRQPAVLRTFSQRLSRGFNDAVNGFPDDGWSLMSSDGAEDVTIAFNSSPNKLVGSHVNSSQLFSAIGGGILCAKASMLLQNVPPALLVRFLREHRSEWADPGVDAYSAAALRASPYAVPGLRAGGFMGSQVILPLAHTLEHEEFLEVIRLEGHSLCHDEVVLSRDMYLLQLCSGVDENAAGACAQLVFAPIDESFADDAPLLPSGFRVIPLDGKTDAPSATRTLDLASTLEVGSGGTTRASSDTSSTCNTRSVLTIAFQFSYENHLRESVAAMARQYVRTVVASVQRVAMAIAPSRLGGQIETKNPPGSPEAHTLARWIGRSYRFHTGADLLRTDSQSMDSSLKAMWQHSDSIMCCSLKAAPVFTFANQAGLDMLETTLIALQDISLEKILDDDGRKALCTEFPKIMQQGFAYLPGGVCVSSMGRPVSYEQAVAWKVLSDDDTPHCLAFMFVNWSFV</sequence>
<dbReference type="EMBL" id="CM000128">
    <property type="protein sequence ID" value="EAY91190.1"/>
    <property type="molecule type" value="Genomic_DNA"/>
</dbReference>
<dbReference type="EMBL" id="EF555551">
    <property type="protein sequence ID" value="ABQ57292.1"/>
    <property type="molecule type" value="mRNA"/>
</dbReference>
<dbReference type="EMBL" id="AF139210">
    <property type="protein sequence ID" value="AAG43283.1"/>
    <property type="molecule type" value="mRNA"/>
</dbReference>
<dbReference type="SMR" id="A2XK30"/>
<dbReference type="STRING" id="39946.A2XK30"/>
<dbReference type="EnsemblPlants" id="BGIOSGA013211-TA">
    <property type="protein sequence ID" value="BGIOSGA013211-PA"/>
    <property type="gene ID" value="BGIOSGA013211"/>
</dbReference>
<dbReference type="EnsemblPlants" id="OsGoSa_03g0027410.01">
    <property type="protein sequence ID" value="OsGoSa_03g0027410.01"/>
    <property type="gene ID" value="OsGoSa_03g0027410"/>
</dbReference>
<dbReference type="EnsemblPlants" id="OsIR64_03g0027020.01">
    <property type="protein sequence ID" value="OsIR64_03g0027020.01"/>
    <property type="gene ID" value="OsIR64_03g0027020"/>
</dbReference>
<dbReference type="EnsemblPlants" id="OsKYG_03g0027320.01">
    <property type="protein sequence ID" value="OsKYG_03g0027320.01"/>
    <property type="gene ID" value="OsKYG_03g0027320"/>
</dbReference>
<dbReference type="EnsemblPlants" id="OsPr106_03g0027260.01">
    <property type="protein sequence ID" value="OsPr106_03g0027260.01"/>
    <property type="gene ID" value="OsPr106_03g0027260"/>
</dbReference>
<dbReference type="EnsemblPlants" id="OsZS97_03G027220_01">
    <property type="protein sequence ID" value="OsZS97_03G027220_01"/>
    <property type="gene ID" value="OsZS97_03G027220"/>
</dbReference>
<dbReference type="Gramene" id="BGIOSGA013211-TA">
    <property type="protein sequence ID" value="BGIOSGA013211-PA"/>
    <property type="gene ID" value="BGIOSGA013211"/>
</dbReference>
<dbReference type="Gramene" id="OsGoSa_03g0027410.01">
    <property type="protein sequence ID" value="OsGoSa_03g0027410.01"/>
    <property type="gene ID" value="OsGoSa_03g0027410"/>
</dbReference>
<dbReference type="Gramene" id="OsIR64_03g0027020.01">
    <property type="protein sequence ID" value="OsIR64_03g0027020.01"/>
    <property type="gene ID" value="OsIR64_03g0027020"/>
</dbReference>
<dbReference type="Gramene" id="OsKYG_03g0027320.01">
    <property type="protein sequence ID" value="OsKYG_03g0027320.01"/>
    <property type="gene ID" value="OsKYG_03g0027320"/>
</dbReference>
<dbReference type="Gramene" id="OsPr106_03g0027260.01">
    <property type="protein sequence ID" value="OsPr106_03g0027260.01"/>
    <property type="gene ID" value="OsPr106_03g0027260"/>
</dbReference>
<dbReference type="Gramene" id="OsZS97_03G027220_01">
    <property type="protein sequence ID" value="OsZS97_03G027220_01"/>
    <property type="gene ID" value="OsZS97_03G027220"/>
</dbReference>
<dbReference type="HOGENOM" id="CLU_012517_0_0_1"/>
<dbReference type="OMA" id="ADPNGCN"/>
<dbReference type="OrthoDB" id="125004at2759"/>
<dbReference type="Proteomes" id="UP000007015">
    <property type="component" value="Chromosome 3"/>
</dbReference>
<dbReference type="GO" id="GO:0005634">
    <property type="term" value="C:nucleus"/>
    <property type="evidence" value="ECO:0007669"/>
    <property type="project" value="UniProtKB-SubCell"/>
</dbReference>
<dbReference type="GO" id="GO:0003677">
    <property type="term" value="F:DNA binding"/>
    <property type="evidence" value="ECO:0007669"/>
    <property type="project" value="UniProtKB-KW"/>
</dbReference>
<dbReference type="GO" id="GO:0003700">
    <property type="term" value="F:DNA-binding transcription factor activity"/>
    <property type="evidence" value="ECO:0007669"/>
    <property type="project" value="InterPro"/>
</dbReference>
<dbReference type="GO" id="GO:0008289">
    <property type="term" value="F:lipid binding"/>
    <property type="evidence" value="ECO:0007669"/>
    <property type="project" value="InterPro"/>
</dbReference>
<dbReference type="CDD" id="cd14686">
    <property type="entry name" value="bZIP"/>
    <property type="match status" value="1"/>
</dbReference>
<dbReference type="CDD" id="cd00086">
    <property type="entry name" value="homeodomain"/>
    <property type="match status" value="1"/>
</dbReference>
<dbReference type="CDD" id="cd08875">
    <property type="entry name" value="START_ArGLABRA2_like"/>
    <property type="match status" value="1"/>
</dbReference>
<dbReference type="FunFam" id="1.10.10.60:FF:000197">
    <property type="entry name" value="Homeobox-leucine zipper protein REVOLUTA"/>
    <property type="match status" value="1"/>
</dbReference>
<dbReference type="Gene3D" id="3.30.530.20">
    <property type="match status" value="1"/>
</dbReference>
<dbReference type="Gene3D" id="1.10.10.60">
    <property type="entry name" value="Homeodomain-like"/>
    <property type="match status" value="1"/>
</dbReference>
<dbReference type="InterPro" id="IPR001356">
    <property type="entry name" value="HD"/>
</dbReference>
<dbReference type="InterPro" id="IPR044830">
    <property type="entry name" value="HD-Zip_III"/>
</dbReference>
<dbReference type="InterPro" id="IPR009057">
    <property type="entry name" value="Homeodomain-like_sf"/>
</dbReference>
<dbReference type="InterPro" id="IPR013978">
    <property type="entry name" value="MEKHLA"/>
</dbReference>
<dbReference type="InterPro" id="IPR023393">
    <property type="entry name" value="START-like_dom_sf"/>
</dbReference>
<dbReference type="InterPro" id="IPR002913">
    <property type="entry name" value="START_lipid-bd_dom"/>
</dbReference>
<dbReference type="PANTHER" id="PTHR45950">
    <property type="entry name" value="HOMEOBOX-LEUCINE ZIPPER PROTEIN ATHB-14"/>
    <property type="match status" value="1"/>
</dbReference>
<dbReference type="PANTHER" id="PTHR45950:SF7">
    <property type="entry name" value="HOMEOBOX-LEUCINE ZIPPER PROTEIN ATHB-14"/>
    <property type="match status" value="1"/>
</dbReference>
<dbReference type="Pfam" id="PF00046">
    <property type="entry name" value="Homeodomain"/>
    <property type="match status" value="1"/>
</dbReference>
<dbReference type="Pfam" id="PF08670">
    <property type="entry name" value="MEKHLA"/>
    <property type="match status" value="1"/>
</dbReference>
<dbReference type="Pfam" id="PF01852">
    <property type="entry name" value="START"/>
    <property type="match status" value="1"/>
</dbReference>
<dbReference type="SMART" id="SM00389">
    <property type="entry name" value="HOX"/>
    <property type="match status" value="1"/>
</dbReference>
<dbReference type="SMART" id="SM00234">
    <property type="entry name" value="START"/>
    <property type="match status" value="1"/>
</dbReference>
<dbReference type="SUPFAM" id="SSF55961">
    <property type="entry name" value="Bet v1-like"/>
    <property type="match status" value="2"/>
</dbReference>
<dbReference type="SUPFAM" id="SSF46689">
    <property type="entry name" value="Homeodomain-like"/>
    <property type="match status" value="1"/>
</dbReference>
<dbReference type="PROSITE" id="PS50071">
    <property type="entry name" value="HOMEOBOX_2"/>
    <property type="match status" value="1"/>
</dbReference>
<dbReference type="PROSITE" id="PS50848">
    <property type="entry name" value="START"/>
    <property type="match status" value="1"/>
</dbReference>
<name>HOX32_ORYSI</name>
<protein>
    <recommendedName>
        <fullName>Homeobox-leucine zipper protein HOX32</fullName>
    </recommendedName>
    <alternativeName>
        <fullName>HD-ZIP protein HOX32</fullName>
    </alternativeName>
    <alternativeName>
        <fullName>Homeodomain transcription factor HOX32</fullName>
    </alternativeName>
    <alternativeName>
        <fullName>OsHox32</fullName>
    </alternativeName>
</protein>
<accession>A2XK30</accession>
<accession>A5JPW6</accession>
<accession>Q9FR80</accession>
<evidence type="ECO:0000250" key="1"/>
<evidence type="ECO:0000255" key="2"/>
<evidence type="ECO:0000255" key="3">
    <source>
        <dbReference type="PROSITE-ProRule" id="PRU00108"/>
    </source>
</evidence>
<evidence type="ECO:0000255" key="4">
    <source>
        <dbReference type="PROSITE-ProRule" id="PRU00197"/>
    </source>
</evidence>
<evidence type="ECO:0000256" key="5">
    <source>
        <dbReference type="SAM" id="MobiDB-lite"/>
    </source>
</evidence>
<evidence type="ECO:0000269" key="6">
    <source>
    </source>
</evidence>
<evidence type="ECO:0000305" key="7"/>
<keyword id="KW-0175">Coiled coil</keyword>
<keyword id="KW-0238">DNA-binding</keyword>
<keyword id="KW-0371">Homeobox</keyword>
<keyword id="KW-0539">Nucleus</keyword>
<keyword id="KW-1185">Reference proteome</keyword>
<keyword id="KW-0804">Transcription</keyword>
<keyword id="KW-0805">Transcription regulation</keyword>
<feature type="chain" id="PRO_0000331731" description="Homeobox-leucine zipper protein HOX32">
    <location>
        <begin position="1"/>
        <end position="859"/>
    </location>
</feature>
<feature type="domain" description="START" evidence="4">
    <location>
        <begin position="171"/>
        <end position="393"/>
    </location>
</feature>
<feature type="DNA-binding region" description="Homeobox" evidence="3">
    <location>
        <begin position="29"/>
        <end position="92"/>
    </location>
</feature>
<feature type="region of interest" description="Disordered" evidence="5">
    <location>
        <begin position="7"/>
        <end position="31"/>
    </location>
</feature>
<feature type="region of interest" description="Disordered" evidence="5">
    <location>
        <begin position="146"/>
        <end position="172"/>
    </location>
</feature>
<feature type="coiled-coil region" evidence="2">
    <location>
        <begin position="100"/>
        <end position="129"/>
    </location>
</feature>
<feature type="compositionally biased region" description="Polar residues" evidence="5">
    <location>
        <begin position="146"/>
        <end position="164"/>
    </location>
</feature>
<reference key="1">
    <citation type="journal article" date="2005" name="PLoS Biol.">
        <title>The genomes of Oryza sativa: a history of duplications.</title>
        <authorList>
            <person name="Yu J."/>
            <person name="Wang J."/>
            <person name="Lin W."/>
            <person name="Li S."/>
            <person name="Li H."/>
            <person name="Zhou J."/>
            <person name="Ni P."/>
            <person name="Dong W."/>
            <person name="Hu S."/>
            <person name="Zeng C."/>
            <person name="Zhang J."/>
            <person name="Zhang Y."/>
            <person name="Li R."/>
            <person name="Xu Z."/>
            <person name="Li S."/>
            <person name="Li X."/>
            <person name="Zheng H."/>
            <person name="Cong L."/>
            <person name="Lin L."/>
            <person name="Yin J."/>
            <person name="Geng J."/>
            <person name="Li G."/>
            <person name="Shi J."/>
            <person name="Liu J."/>
            <person name="Lv H."/>
            <person name="Li J."/>
            <person name="Wang J."/>
            <person name="Deng Y."/>
            <person name="Ran L."/>
            <person name="Shi X."/>
            <person name="Wang X."/>
            <person name="Wu Q."/>
            <person name="Li C."/>
            <person name="Ren X."/>
            <person name="Wang J."/>
            <person name="Wang X."/>
            <person name="Li D."/>
            <person name="Liu D."/>
            <person name="Zhang X."/>
            <person name="Ji Z."/>
            <person name="Zhao W."/>
            <person name="Sun Y."/>
            <person name="Zhang Z."/>
            <person name="Bao J."/>
            <person name="Han Y."/>
            <person name="Dong L."/>
            <person name="Ji J."/>
            <person name="Chen P."/>
            <person name="Wu S."/>
            <person name="Liu J."/>
            <person name="Xiao Y."/>
            <person name="Bu D."/>
            <person name="Tan J."/>
            <person name="Yang L."/>
            <person name="Ye C."/>
            <person name="Zhang J."/>
            <person name="Xu J."/>
            <person name="Zhou Y."/>
            <person name="Yu Y."/>
            <person name="Zhang B."/>
            <person name="Zhuang S."/>
            <person name="Wei H."/>
            <person name="Liu B."/>
            <person name="Lei M."/>
            <person name="Yu H."/>
            <person name="Li Y."/>
            <person name="Xu H."/>
            <person name="Wei S."/>
            <person name="He X."/>
            <person name="Fang L."/>
            <person name="Zhang Z."/>
            <person name="Zhang Y."/>
            <person name="Huang X."/>
            <person name="Su Z."/>
            <person name="Tong W."/>
            <person name="Li J."/>
            <person name="Tong Z."/>
            <person name="Li S."/>
            <person name="Ye J."/>
            <person name="Wang L."/>
            <person name="Fang L."/>
            <person name="Lei T."/>
            <person name="Chen C.-S."/>
            <person name="Chen H.-C."/>
            <person name="Xu Z."/>
            <person name="Li H."/>
            <person name="Huang H."/>
            <person name="Zhang F."/>
            <person name="Xu H."/>
            <person name="Li N."/>
            <person name="Zhao C."/>
            <person name="Li S."/>
            <person name="Dong L."/>
            <person name="Huang Y."/>
            <person name="Li L."/>
            <person name="Xi Y."/>
            <person name="Qi Q."/>
            <person name="Li W."/>
            <person name="Zhang B."/>
            <person name="Hu W."/>
            <person name="Zhang Y."/>
            <person name="Tian X."/>
            <person name="Jiao Y."/>
            <person name="Liang X."/>
            <person name="Jin J."/>
            <person name="Gao L."/>
            <person name="Zheng W."/>
            <person name="Hao B."/>
            <person name="Liu S.-M."/>
            <person name="Wang W."/>
            <person name="Yuan L."/>
            <person name="Cao M."/>
            <person name="McDermott J."/>
            <person name="Samudrala R."/>
            <person name="Wang J."/>
            <person name="Wong G.K.-S."/>
            <person name="Yang H."/>
        </authorList>
    </citation>
    <scope>NUCLEOTIDE SEQUENCE [LARGE SCALE GENOMIC DNA]</scope>
    <source>
        <strain>cv. 93-11</strain>
    </source>
</reference>
<reference key="2">
    <citation type="journal article" date="2008" name="Plant Mol. Biol.">
        <title>A genome-wide survey of HD-Zip genes in rice and analysis of drought-responsive family members.</title>
        <authorList>
            <person name="Agalou A."/>
            <person name="Purwantomo S."/>
            <person name="Oevernaes E."/>
            <person name="Johannesson H."/>
            <person name="Zhu X."/>
            <person name="Estiati A."/>
            <person name="de Kam R.J."/>
            <person name="Engstroem P."/>
            <person name="Slamet-Loedin I.H."/>
            <person name="Zhu Z."/>
            <person name="Wang M."/>
            <person name="Xiong L."/>
            <person name="Meijer A.H."/>
            <person name="Ouwerkerk P.B.F."/>
        </authorList>
    </citation>
    <scope>NUCLEOTIDE SEQUENCE [MRNA] OF 396-543</scope>
    <scope>TISSUE SPECIFICITY</scope>
    <scope>GENE FAMILY</scope>
    <scope>NOMENCLATURE</scope>
    <source>
        <strain>cv. Minghui 86</strain>
    </source>
</reference>
<reference key="3">
    <citation type="submission" date="1999-03" db="EMBL/GenBank/DDBJ databases">
        <title>Suppression subtractive hybridization (SSH) identified candidate genes that are differentially expressed at rice young panicle.</title>
        <authorList>
            <person name="Liu J."/>
            <person name="Liu J.D."/>
            <person name="Yang J.S."/>
        </authorList>
    </citation>
    <scope>NUCLEOTIDE SEQUENCE [MRNA] OF 570-802</scope>
    <source>
        <tissue>Panicle</tissue>
    </source>
</reference>
<proteinExistence type="evidence at transcript level"/>
<gene>
    <name type="primary">HOX32</name>
    <name type="ORF">OsI_012423</name>
</gene>
<organism>
    <name type="scientific">Oryza sativa subsp. indica</name>
    <name type="common">Rice</name>
    <dbReference type="NCBI Taxonomy" id="39946"/>
    <lineage>
        <taxon>Eukaryota</taxon>
        <taxon>Viridiplantae</taxon>
        <taxon>Streptophyta</taxon>
        <taxon>Embryophyta</taxon>
        <taxon>Tracheophyta</taxon>
        <taxon>Spermatophyta</taxon>
        <taxon>Magnoliopsida</taxon>
        <taxon>Liliopsida</taxon>
        <taxon>Poales</taxon>
        <taxon>Poaceae</taxon>
        <taxon>BOP clade</taxon>
        <taxon>Oryzoideae</taxon>
        <taxon>Oryzeae</taxon>
        <taxon>Oryzinae</taxon>
        <taxon>Oryza</taxon>
        <taxon>Oryza sativa</taxon>
    </lineage>
</organism>